<feature type="chain" id="PRO_0000337620" description="Enolase">
    <location>
        <begin position="1"/>
        <end position="425"/>
    </location>
</feature>
<feature type="active site" description="Proton donor" evidence="1">
    <location>
        <position position="203"/>
    </location>
</feature>
<feature type="active site" description="Proton acceptor" evidence="1">
    <location>
        <position position="335"/>
    </location>
</feature>
<feature type="binding site" evidence="1">
    <location>
        <position position="161"/>
    </location>
    <ligand>
        <name>(2R)-2-phosphoglycerate</name>
        <dbReference type="ChEBI" id="CHEBI:58289"/>
    </ligand>
</feature>
<feature type="binding site" evidence="1">
    <location>
        <position position="240"/>
    </location>
    <ligand>
        <name>Mg(2+)</name>
        <dbReference type="ChEBI" id="CHEBI:18420"/>
    </ligand>
</feature>
<feature type="binding site" evidence="1">
    <location>
        <position position="283"/>
    </location>
    <ligand>
        <name>Mg(2+)</name>
        <dbReference type="ChEBI" id="CHEBI:18420"/>
    </ligand>
</feature>
<feature type="binding site" evidence="1">
    <location>
        <position position="310"/>
    </location>
    <ligand>
        <name>Mg(2+)</name>
        <dbReference type="ChEBI" id="CHEBI:18420"/>
    </ligand>
</feature>
<feature type="binding site" evidence="1">
    <location>
        <position position="335"/>
    </location>
    <ligand>
        <name>(2R)-2-phosphoglycerate</name>
        <dbReference type="ChEBI" id="CHEBI:58289"/>
    </ligand>
</feature>
<feature type="binding site" evidence="1">
    <location>
        <position position="364"/>
    </location>
    <ligand>
        <name>(2R)-2-phosphoglycerate</name>
        <dbReference type="ChEBI" id="CHEBI:58289"/>
    </ligand>
</feature>
<feature type="binding site" evidence="1">
    <location>
        <position position="365"/>
    </location>
    <ligand>
        <name>(2R)-2-phosphoglycerate</name>
        <dbReference type="ChEBI" id="CHEBI:58289"/>
    </ligand>
</feature>
<feature type="binding site" evidence="1">
    <location>
        <position position="386"/>
    </location>
    <ligand>
        <name>(2R)-2-phosphoglycerate</name>
        <dbReference type="ChEBI" id="CHEBI:58289"/>
    </ligand>
</feature>
<proteinExistence type="inferred from homology"/>
<sequence length="425" mass="46379">MNIKQIKAREVLDSRGNPTVEVDVILDDDTIGSAMVPSGASTGQREALELRDGGTRYLGKGVLKAVEFVNTEICNTLINFGIEDLGKIDQAMIDLDGTETKSRLGANAILAVSLAVAHANANRQHKPLYMSLNQGENYKLPVPMMNIINGGEHANNNVDIQEFMIIPAGAPSFKEALRYGAEVFHHLKAVLEAKNMNTTVGDEGGFAPDLSSNEDAIKVILEAIDNAGYKAGKDIFIGIDAASSEFYENGTYNLVSENKSLNSEEFVDYLANWVENYPIISIEDGMDENDWNGWNLLTKKIGDKVQLVGDDLYVTNSKFLKQGIEKNITNSILIKVNQIGTLTETFQVMKMATDAGYTSVMSHRSGETEDTTIADLAVATGCGQIKTGSLSRSDRLAKYNRLLRIEEELGAKAVYPGLDAFNHLN</sequence>
<organism>
    <name type="scientific">Ruthia magnifica subsp. Calyptogena magnifica</name>
    <dbReference type="NCBI Taxonomy" id="413404"/>
    <lineage>
        <taxon>Bacteria</taxon>
        <taxon>Pseudomonadati</taxon>
        <taxon>Pseudomonadota</taxon>
        <taxon>Gammaproteobacteria</taxon>
        <taxon>Candidatus Pseudothioglobaceae</taxon>
        <taxon>Candidatus Ruthturnera</taxon>
    </lineage>
</organism>
<name>ENO_RUTMC</name>
<comment type="function">
    <text evidence="1">Catalyzes the reversible conversion of 2-phosphoglycerate (2-PG) into phosphoenolpyruvate (PEP). It is essential for the degradation of carbohydrates via glycolysis.</text>
</comment>
<comment type="catalytic activity">
    <reaction evidence="1">
        <text>(2R)-2-phosphoglycerate = phosphoenolpyruvate + H2O</text>
        <dbReference type="Rhea" id="RHEA:10164"/>
        <dbReference type="ChEBI" id="CHEBI:15377"/>
        <dbReference type="ChEBI" id="CHEBI:58289"/>
        <dbReference type="ChEBI" id="CHEBI:58702"/>
        <dbReference type="EC" id="4.2.1.11"/>
    </reaction>
</comment>
<comment type="cofactor">
    <cofactor evidence="1">
        <name>Mg(2+)</name>
        <dbReference type="ChEBI" id="CHEBI:18420"/>
    </cofactor>
    <text evidence="1">Binds a second Mg(2+) ion via substrate during catalysis.</text>
</comment>
<comment type="pathway">
    <text evidence="1">Carbohydrate degradation; glycolysis; pyruvate from D-glyceraldehyde 3-phosphate: step 4/5.</text>
</comment>
<comment type="subunit">
    <text evidence="1">Component of the RNA degradosome, a multiprotein complex involved in RNA processing and mRNA degradation.</text>
</comment>
<comment type="subcellular location">
    <subcellularLocation>
        <location evidence="1">Cytoplasm</location>
    </subcellularLocation>
    <subcellularLocation>
        <location evidence="1">Secreted</location>
    </subcellularLocation>
    <subcellularLocation>
        <location evidence="1">Cell surface</location>
    </subcellularLocation>
    <text evidence="1">Fractions of enolase are present in both the cytoplasm and on the cell surface.</text>
</comment>
<comment type="similarity">
    <text evidence="1">Belongs to the enolase family.</text>
</comment>
<gene>
    <name evidence="1" type="primary">eno</name>
    <name type="ordered locus">Rmag_0351</name>
</gene>
<dbReference type="EC" id="4.2.1.11" evidence="1"/>
<dbReference type="EMBL" id="CP000488">
    <property type="protein sequence ID" value="ABL02127.1"/>
    <property type="molecule type" value="Genomic_DNA"/>
</dbReference>
<dbReference type="RefSeq" id="WP_011737752.1">
    <property type="nucleotide sequence ID" value="NC_008610.1"/>
</dbReference>
<dbReference type="SMR" id="A1AW20"/>
<dbReference type="STRING" id="413404.Rmag_0351"/>
<dbReference type="KEGG" id="rma:Rmag_0351"/>
<dbReference type="eggNOG" id="COG0148">
    <property type="taxonomic scope" value="Bacteria"/>
</dbReference>
<dbReference type="HOGENOM" id="CLU_031223_2_1_6"/>
<dbReference type="OrthoDB" id="9804716at2"/>
<dbReference type="UniPathway" id="UPA00109">
    <property type="reaction ID" value="UER00187"/>
</dbReference>
<dbReference type="Proteomes" id="UP000002587">
    <property type="component" value="Chromosome"/>
</dbReference>
<dbReference type="GO" id="GO:0009986">
    <property type="term" value="C:cell surface"/>
    <property type="evidence" value="ECO:0007669"/>
    <property type="project" value="UniProtKB-SubCell"/>
</dbReference>
<dbReference type="GO" id="GO:0005576">
    <property type="term" value="C:extracellular region"/>
    <property type="evidence" value="ECO:0007669"/>
    <property type="project" value="UniProtKB-SubCell"/>
</dbReference>
<dbReference type="GO" id="GO:0000015">
    <property type="term" value="C:phosphopyruvate hydratase complex"/>
    <property type="evidence" value="ECO:0007669"/>
    <property type="project" value="InterPro"/>
</dbReference>
<dbReference type="GO" id="GO:0000287">
    <property type="term" value="F:magnesium ion binding"/>
    <property type="evidence" value="ECO:0007669"/>
    <property type="project" value="UniProtKB-UniRule"/>
</dbReference>
<dbReference type="GO" id="GO:0004634">
    <property type="term" value="F:phosphopyruvate hydratase activity"/>
    <property type="evidence" value="ECO:0007669"/>
    <property type="project" value="UniProtKB-UniRule"/>
</dbReference>
<dbReference type="GO" id="GO:0006096">
    <property type="term" value="P:glycolytic process"/>
    <property type="evidence" value="ECO:0007669"/>
    <property type="project" value="UniProtKB-UniRule"/>
</dbReference>
<dbReference type="CDD" id="cd03313">
    <property type="entry name" value="enolase"/>
    <property type="match status" value="1"/>
</dbReference>
<dbReference type="FunFam" id="3.20.20.120:FF:000001">
    <property type="entry name" value="Enolase"/>
    <property type="match status" value="1"/>
</dbReference>
<dbReference type="FunFam" id="3.30.390.10:FF:000001">
    <property type="entry name" value="Enolase"/>
    <property type="match status" value="1"/>
</dbReference>
<dbReference type="Gene3D" id="3.20.20.120">
    <property type="entry name" value="Enolase-like C-terminal domain"/>
    <property type="match status" value="1"/>
</dbReference>
<dbReference type="Gene3D" id="3.30.390.10">
    <property type="entry name" value="Enolase-like, N-terminal domain"/>
    <property type="match status" value="1"/>
</dbReference>
<dbReference type="HAMAP" id="MF_00318">
    <property type="entry name" value="Enolase"/>
    <property type="match status" value="1"/>
</dbReference>
<dbReference type="InterPro" id="IPR000941">
    <property type="entry name" value="Enolase"/>
</dbReference>
<dbReference type="InterPro" id="IPR036849">
    <property type="entry name" value="Enolase-like_C_sf"/>
</dbReference>
<dbReference type="InterPro" id="IPR029017">
    <property type="entry name" value="Enolase-like_N"/>
</dbReference>
<dbReference type="InterPro" id="IPR020810">
    <property type="entry name" value="Enolase_C"/>
</dbReference>
<dbReference type="InterPro" id="IPR020809">
    <property type="entry name" value="Enolase_CS"/>
</dbReference>
<dbReference type="InterPro" id="IPR020811">
    <property type="entry name" value="Enolase_N"/>
</dbReference>
<dbReference type="NCBIfam" id="TIGR01060">
    <property type="entry name" value="eno"/>
    <property type="match status" value="1"/>
</dbReference>
<dbReference type="PANTHER" id="PTHR11902">
    <property type="entry name" value="ENOLASE"/>
    <property type="match status" value="1"/>
</dbReference>
<dbReference type="PANTHER" id="PTHR11902:SF1">
    <property type="entry name" value="ENOLASE"/>
    <property type="match status" value="1"/>
</dbReference>
<dbReference type="Pfam" id="PF00113">
    <property type="entry name" value="Enolase_C"/>
    <property type="match status" value="1"/>
</dbReference>
<dbReference type="Pfam" id="PF03952">
    <property type="entry name" value="Enolase_N"/>
    <property type="match status" value="1"/>
</dbReference>
<dbReference type="PIRSF" id="PIRSF001400">
    <property type="entry name" value="Enolase"/>
    <property type="match status" value="1"/>
</dbReference>
<dbReference type="PRINTS" id="PR00148">
    <property type="entry name" value="ENOLASE"/>
</dbReference>
<dbReference type="SFLD" id="SFLDS00001">
    <property type="entry name" value="Enolase"/>
    <property type="match status" value="1"/>
</dbReference>
<dbReference type="SFLD" id="SFLDF00002">
    <property type="entry name" value="enolase"/>
    <property type="match status" value="1"/>
</dbReference>
<dbReference type="SMART" id="SM01192">
    <property type="entry name" value="Enolase_C"/>
    <property type="match status" value="1"/>
</dbReference>
<dbReference type="SMART" id="SM01193">
    <property type="entry name" value="Enolase_N"/>
    <property type="match status" value="1"/>
</dbReference>
<dbReference type="SUPFAM" id="SSF51604">
    <property type="entry name" value="Enolase C-terminal domain-like"/>
    <property type="match status" value="1"/>
</dbReference>
<dbReference type="SUPFAM" id="SSF54826">
    <property type="entry name" value="Enolase N-terminal domain-like"/>
    <property type="match status" value="1"/>
</dbReference>
<dbReference type="PROSITE" id="PS00164">
    <property type="entry name" value="ENOLASE"/>
    <property type="match status" value="1"/>
</dbReference>
<protein>
    <recommendedName>
        <fullName evidence="1">Enolase</fullName>
        <ecNumber evidence="1">4.2.1.11</ecNumber>
    </recommendedName>
    <alternativeName>
        <fullName evidence="1">2-phospho-D-glycerate hydro-lyase</fullName>
    </alternativeName>
    <alternativeName>
        <fullName evidence="1">2-phosphoglycerate dehydratase</fullName>
    </alternativeName>
</protein>
<reference key="1">
    <citation type="journal article" date="2007" name="Science">
        <title>The Calyptogena magnifica chemoautotrophic symbiont genome.</title>
        <authorList>
            <person name="Newton I.L.G."/>
            <person name="Woyke T."/>
            <person name="Auchtung T.A."/>
            <person name="Dilly G.F."/>
            <person name="Dutton R.J."/>
            <person name="Fisher M.C."/>
            <person name="Fontanez K.M."/>
            <person name="Lau E."/>
            <person name="Stewart F.J."/>
            <person name="Richardson P.M."/>
            <person name="Barry K.W."/>
            <person name="Saunders E."/>
            <person name="Detter J.C."/>
            <person name="Wu D."/>
            <person name="Eisen J.A."/>
            <person name="Cavanaugh C.M."/>
        </authorList>
    </citation>
    <scope>NUCLEOTIDE SEQUENCE [LARGE SCALE GENOMIC DNA]</scope>
</reference>
<keyword id="KW-0963">Cytoplasm</keyword>
<keyword id="KW-0324">Glycolysis</keyword>
<keyword id="KW-0456">Lyase</keyword>
<keyword id="KW-0460">Magnesium</keyword>
<keyword id="KW-0479">Metal-binding</keyword>
<keyword id="KW-0964">Secreted</keyword>
<evidence type="ECO:0000255" key="1">
    <source>
        <dbReference type="HAMAP-Rule" id="MF_00318"/>
    </source>
</evidence>
<accession>A1AW20</accession>